<keyword id="KW-0963">Cytoplasm</keyword>
<keyword id="KW-0342">GTP-binding</keyword>
<keyword id="KW-0378">Hydrolase</keyword>
<keyword id="KW-0460">Magnesium</keyword>
<keyword id="KW-0479">Metal-binding</keyword>
<keyword id="KW-0547">Nucleotide-binding</keyword>
<keyword id="KW-0630">Potassium</keyword>
<keyword id="KW-1185">Reference proteome</keyword>
<keyword id="KW-0819">tRNA processing</keyword>
<gene>
    <name evidence="1" type="primary">mnmE</name>
    <name evidence="1" type="synonym">trmE</name>
    <name type="ordered locus">SbBS512_E4219</name>
</gene>
<accession>B2TUS2</accession>
<protein>
    <recommendedName>
        <fullName evidence="1">tRNA modification GTPase MnmE</fullName>
        <ecNumber evidence="1">3.6.-.-</ecNumber>
    </recommendedName>
</protein>
<organism>
    <name type="scientific">Shigella boydii serotype 18 (strain CDC 3083-94 / BS512)</name>
    <dbReference type="NCBI Taxonomy" id="344609"/>
    <lineage>
        <taxon>Bacteria</taxon>
        <taxon>Pseudomonadati</taxon>
        <taxon>Pseudomonadota</taxon>
        <taxon>Gammaproteobacteria</taxon>
        <taxon>Enterobacterales</taxon>
        <taxon>Enterobacteriaceae</taxon>
        <taxon>Shigella</taxon>
    </lineage>
</organism>
<feature type="chain" id="PRO_1000197065" description="tRNA modification GTPase MnmE">
    <location>
        <begin position="1"/>
        <end position="454"/>
    </location>
</feature>
<feature type="domain" description="TrmE-type G">
    <location>
        <begin position="216"/>
        <end position="377"/>
    </location>
</feature>
<feature type="binding site" evidence="1">
    <location>
        <position position="23"/>
    </location>
    <ligand>
        <name>(6S)-5-formyl-5,6,7,8-tetrahydrofolate</name>
        <dbReference type="ChEBI" id="CHEBI:57457"/>
    </ligand>
</feature>
<feature type="binding site" evidence="1">
    <location>
        <position position="80"/>
    </location>
    <ligand>
        <name>(6S)-5-formyl-5,6,7,8-tetrahydrofolate</name>
        <dbReference type="ChEBI" id="CHEBI:57457"/>
    </ligand>
</feature>
<feature type="binding site" evidence="1">
    <location>
        <position position="120"/>
    </location>
    <ligand>
        <name>(6S)-5-formyl-5,6,7,8-tetrahydrofolate</name>
        <dbReference type="ChEBI" id="CHEBI:57457"/>
    </ligand>
</feature>
<feature type="binding site" evidence="1">
    <location>
        <begin position="226"/>
        <end position="231"/>
    </location>
    <ligand>
        <name>GTP</name>
        <dbReference type="ChEBI" id="CHEBI:37565"/>
    </ligand>
</feature>
<feature type="binding site" evidence="1">
    <location>
        <position position="226"/>
    </location>
    <ligand>
        <name>K(+)</name>
        <dbReference type="ChEBI" id="CHEBI:29103"/>
    </ligand>
</feature>
<feature type="binding site" evidence="1">
    <location>
        <position position="230"/>
    </location>
    <ligand>
        <name>Mg(2+)</name>
        <dbReference type="ChEBI" id="CHEBI:18420"/>
    </ligand>
</feature>
<feature type="binding site" evidence="1">
    <location>
        <begin position="245"/>
        <end position="251"/>
    </location>
    <ligand>
        <name>GTP</name>
        <dbReference type="ChEBI" id="CHEBI:37565"/>
    </ligand>
</feature>
<feature type="binding site" evidence="1">
    <location>
        <position position="245"/>
    </location>
    <ligand>
        <name>K(+)</name>
        <dbReference type="ChEBI" id="CHEBI:29103"/>
    </ligand>
</feature>
<feature type="binding site" evidence="1">
    <location>
        <position position="247"/>
    </location>
    <ligand>
        <name>K(+)</name>
        <dbReference type="ChEBI" id="CHEBI:29103"/>
    </ligand>
</feature>
<feature type="binding site" evidence="1">
    <location>
        <position position="250"/>
    </location>
    <ligand>
        <name>K(+)</name>
        <dbReference type="ChEBI" id="CHEBI:29103"/>
    </ligand>
</feature>
<feature type="binding site" evidence="1">
    <location>
        <position position="251"/>
    </location>
    <ligand>
        <name>Mg(2+)</name>
        <dbReference type="ChEBI" id="CHEBI:18420"/>
    </ligand>
</feature>
<feature type="binding site" evidence="1">
    <location>
        <begin position="270"/>
        <end position="273"/>
    </location>
    <ligand>
        <name>GTP</name>
        <dbReference type="ChEBI" id="CHEBI:37565"/>
    </ligand>
</feature>
<feature type="binding site" evidence="1">
    <location>
        <begin position="335"/>
        <end position="338"/>
    </location>
    <ligand>
        <name>GTP</name>
        <dbReference type="ChEBI" id="CHEBI:37565"/>
    </ligand>
</feature>
<feature type="binding site" evidence="1">
    <location>
        <begin position="358"/>
        <end position="360"/>
    </location>
    <ligand>
        <name>GTP</name>
        <dbReference type="ChEBI" id="CHEBI:37565"/>
    </ligand>
</feature>
<feature type="binding site" evidence="1">
    <location>
        <position position="454"/>
    </location>
    <ligand>
        <name>(6S)-5-formyl-5,6,7,8-tetrahydrofolate</name>
        <dbReference type="ChEBI" id="CHEBI:57457"/>
    </ligand>
</feature>
<comment type="function">
    <text evidence="1">Exhibits a very high intrinsic GTPase hydrolysis rate. Involved in the addition of a carboxymethylaminomethyl (cmnm) group at the wobble position (U34) of certain tRNAs, forming tRNA-cmnm(5)s(2)U34.</text>
</comment>
<comment type="cofactor">
    <cofactor evidence="1">
        <name>K(+)</name>
        <dbReference type="ChEBI" id="CHEBI:29103"/>
    </cofactor>
    <text evidence="1">Binds 1 potassium ion per subunit.</text>
</comment>
<comment type="subunit">
    <text evidence="1">Homodimer. Heterotetramer of two MnmE and two MnmG subunits.</text>
</comment>
<comment type="subcellular location">
    <subcellularLocation>
        <location evidence="1">Cytoplasm</location>
    </subcellularLocation>
</comment>
<comment type="similarity">
    <text evidence="1">Belongs to the TRAFAC class TrmE-Era-EngA-EngB-Septin-like GTPase superfamily. TrmE GTPase family.</text>
</comment>
<dbReference type="EC" id="3.6.-.-" evidence="1"/>
<dbReference type="EMBL" id="CP001063">
    <property type="protein sequence ID" value="ACD08285.1"/>
    <property type="molecule type" value="Genomic_DNA"/>
</dbReference>
<dbReference type="RefSeq" id="WP_001282346.1">
    <property type="nucleotide sequence ID" value="NC_010658.1"/>
</dbReference>
<dbReference type="SMR" id="B2TUS2"/>
<dbReference type="STRING" id="344609.SbBS512_E4219"/>
<dbReference type="GeneID" id="86861818"/>
<dbReference type="KEGG" id="sbc:SbBS512_E4219"/>
<dbReference type="HOGENOM" id="CLU_019624_4_1_6"/>
<dbReference type="Proteomes" id="UP000001030">
    <property type="component" value="Chromosome"/>
</dbReference>
<dbReference type="GO" id="GO:0005829">
    <property type="term" value="C:cytosol"/>
    <property type="evidence" value="ECO:0007669"/>
    <property type="project" value="TreeGrafter"/>
</dbReference>
<dbReference type="GO" id="GO:0005525">
    <property type="term" value="F:GTP binding"/>
    <property type="evidence" value="ECO:0007669"/>
    <property type="project" value="UniProtKB-UniRule"/>
</dbReference>
<dbReference type="GO" id="GO:0003924">
    <property type="term" value="F:GTPase activity"/>
    <property type="evidence" value="ECO:0007669"/>
    <property type="project" value="UniProtKB-UniRule"/>
</dbReference>
<dbReference type="GO" id="GO:0046872">
    <property type="term" value="F:metal ion binding"/>
    <property type="evidence" value="ECO:0007669"/>
    <property type="project" value="UniProtKB-KW"/>
</dbReference>
<dbReference type="GO" id="GO:0030488">
    <property type="term" value="P:tRNA methylation"/>
    <property type="evidence" value="ECO:0007669"/>
    <property type="project" value="TreeGrafter"/>
</dbReference>
<dbReference type="GO" id="GO:0002098">
    <property type="term" value="P:tRNA wobble uridine modification"/>
    <property type="evidence" value="ECO:0007669"/>
    <property type="project" value="TreeGrafter"/>
</dbReference>
<dbReference type="CDD" id="cd04164">
    <property type="entry name" value="trmE"/>
    <property type="match status" value="1"/>
</dbReference>
<dbReference type="CDD" id="cd14858">
    <property type="entry name" value="TrmE_N"/>
    <property type="match status" value="1"/>
</dbReference>
<dbReference type="FunFam" id="3.30.1360.120:FF:000001">
    <property type="entry name" value="tRNA modification GTPase MnmE"/>
    <property type="match status" value="1"/>
</dbReference>
<dbReference type="FunFam" id="3.40.50.300:FF:000249">
    <property type="entry name" value="tRNA modification GTPase MnmE"/>
    <property type="match status" value="1"/>
</dbReference>
<dbReference type="Gene3D" id="3.40.50.300">
    <property type="entry name" value="P-loop containing nucleotide triphosphate hydrolases"/>
    <property type="match status" value="1"/>
</dbReference>
<dbReference type="Gene3D" id="3.30.1360.120">
    <property type="entry name" value="Probable tRNA modification gtpase trme, domain 1"/>
    <property type="match status" value="1"/>
</dbReference>
<dbReference type="Gene3D" id="1.20.120.430">
    <property type="entry name" value="tRNA modification GTPase MnmE domain 2"/>
    <property type="match status" value="1"/>
</dbReference>
<dbReference type="HAMAP" id="MF_00379">
    <property type="entry name" value="GTPase_MnmE"/>
    <property type="match status" value="1"/>
</dbReference>
<dbReference type="InterPro" id="IPR031168">
    <property type="entry name" value="G_TrmE"/>
</dbReference>
<dbReference type="InterPro" id="IPR006073">
    <property type="entry name" value="GTP-bd"/>
</dbReference>
<dbReference type="InterPro" id="IPR018948">
    <property type="entry name" value="GTP-bd_TrmE_N"/>
</dbReference>
<dbReference type="InterPro" id="IPR004520">
    <property type="entry name" value="GTPase_MnmE"/>
</dbReference>
<dbReference type="InterPro" id="IPR027368">
    <property type="entry name" value="MnmE_dom2"/>
</dbReference>
<dbReference type="InterPro" id="IPR025867">
    <property type="entry name" value="MnmE_helical"/>
</dbReference>
<dbReference type="InterPro" id="IPR027417">
    <property type="entry name" value="P-loop_NTPase"/>
</dbReference>
<dbReference type="InterPro" id="IPR005225">
    <property type="entry name" value="Small_GTP-bd"/>
</dbReference>
<dbReference type="InterPro" id="IPR027266">
    <property type="entry name" value="TrmE/GcvT_dom1"/>
</dbReference>
<dbReference type="NCBIfam" id="TIGR00450">
    <property type="entry name" value="mnmE_trmE_thdF"/>
    <property type="match status" value="1"/>
</dbReference>
<dbReference type="NCBIfam" id="NF003661">
    <property type="entry name" value="PRK05291.1-3"/>
    <property type="match status" value="1"/>
</dbReference>
<dbReference type="NCBIfam" id="TIGR00231">
    <property type="entry name" value="small_GTP"/>
    <property type="match status" value="1"/>
</dbReference>
<dbReference type="PANTHER" id="PTHR42714">
    <property type="entry name" value="TRNA MODIFICATION GTPASE GTPBP3"/>
    <property type="match status" value="1"/>
</dbReference>
<dbReference type="PANTHER" id="PTHR42714:SF2">
    <property type="entry name" value="TRNA MODIFICATION GTPASE GTPBP3, MITOCHONDRIAL"/>
    <property type="match status" value="1"/>
</dbReference>
<dbReference type="Pfam" id="PF01926">
    <property type="entry name" value="MMR_HSR1"/>
    <property type="match status" value="1"/>
</dbReference>
<dbReference type="Pfam" id="PF12631">
    <property type="entry name" value="MnmE_helical"/>
    <property type="match status" value="1"/>
</dbReference>
<dbReference type="Pfam" id="PF10396">
    <property type="entry name" value="TrmE_N"/>
    <property type="match status" value="1"/>
</dbReference>
<dbReference type="SUPFAM" id="SSF52540">
    <property type="entry name" value="P-loop containing nucleoside triphosphate hydrolases"/>
    <property type="match status" value="1"/>
</dbReference>
<dbReference type="SUPFAM" id="SSF116878">
    <property type="entry name" value="TrmE connector domain"/>
    <property type="match status" value="1"/>
</dbReference>
<dbReference type="PROSITE" id="PS51709">
    <property type="entry name" value="G_TRME"/>
    <property type="match status" value="1"/>
</dbReference>
<name>MNME_SHIB3</name>
<sequence length="454" mass="49231">MSDNDTIVAQATPPGRGGVGILRISGFKAREVAETVLGKLPKPRYADYLPFKDADGSVLDQGIALWFPGPNSFTGEDVLELQGHGGPVILDLLLKRILTIPGLRIARPGEFSERAFLNDKLDLAQAEAIADLIDASSEQAARSALNSLQGAFSARVNHLVEALTHLRIYVEAAIDFPDEEIDFLSDGKIEAQLNDVIADLDAVRAEARQGSLLREGMKVVIAGRPNAGKSSLLNALAGREAAIVTDIAGTTRDVLREHIHIDGMPLHIIDTAGLREASDEVERIGIERAWQEIEQADRVLFMVDGTTTDAVDPAEIWPEFIARLPAKLPITVVRNKADITGETLGMSEVNGHALIRLSARTGEGVDVLRNHLKQSMGFDTNMEGGFLARRRHLQALEQAAEHLQQGKAQLLGAWAGELLAEELRLAQQNLSEITGEFTSDDLLGRIFSSFCIGK</sequence>
<evidence type="ECO:0000255" key="1">
    <source>
        <dbReference type="HAMAP-Rule" id="MF_00379"/>
    </source>
</evidence>
<reference key="1">
    <citation type="submission" date="2008-05" db="EMBL/GenBank/DDBJ databases">
        <title>Complete sequence of Shigella boydii serotype 18 strain BS512.</title>
        <authorList>
            <person name="Rasko D.A."/>
            <person name="Rosovitz M."/>
            <person name="Maurelli A.T."/>
            <person name="Myers G."/>
            <person name="Seshadri R."/>
            <person name="Cer R."/>
            <person name="Jiang L."/>
            <person name="Ravel J."/>
            <person name="Sebastian Y."/>
        </authorList>
    </citation>
    <scope>NUCLEOTIDE SEQUENCE [LARGE SCALE GENOMIC DNA]</scope>
    <source>
        <strain>CDC 3083-94 / BS512</strain>
    </source>
</reference>
<proteinExistence type="inferred from homology"/>